<evidence type="ECO:0000269" key="1">
    <source ref="1"/>
</evidence>
<keyword id="KW-0027">Amidation</keyword>
<keyword id="KW-0903">Direct protein sequencing</keyword>
<keyword id="KW-0527">Neuropeptide</keyword>
<keyword id="KW-0873">Pyrrolidone carboxylic acid</keyword>
<keyword id="KW-0964">Secreted</keyword>
<reference key="1">
    <citation type="journal article" date="1987" name="Comp. Biochem. Physiol.">
        <title>Isolation, primary structure, and synthesis of leucokinins V and VI: myotropic peptides of Leucophaea maderae.</title>
        <authorList>
            <person name="Holman G.M."/>
            <person name="Cook B.J."/>
            <person name="Nachman R.J."/>
        </authorList>
    </citation>
    <scope>PROTEIN SEQUENCE</scope>
    <scope>PYROGLUTAMATE FORMATION AT GLN-1</scope>
    <scope>AMIDATION AT GLY-8</scope>
    <source>
        <tissue>Head</tissue>
    </source>
</reference>
<accession>P19988</accession>
<name>LCK6_RHYMA</name>
<comment type="function">
    <text>This cephalomyotropic peptide stimulates contractile activity of cockroach protodeum (hindgut).</text>
</comment>
<comment type="subcellular location">
    <subcellularLocation>
        <location>Secreted</location>
    </subcellularLocation>
</comment>
<organism>
    <name type="scientific">Rhyparobia maderae</name>
    <name type="common">Madeira cockroach</name>
    <name type="synonym">Leucophaea maderae</name>
    <dbReference type="NCBI Taxonomy" id="36963"/>
    <lineage>
        <taxon>Eukaryota</taxon>
        <taxon>Metazoa</taxon>
        <taxon>Ecdysozoa</taxon>
        <taxon>Arthropoda</taxon>
        <taxon>Hexapoda</taxon>
        <taxon>Insecta</taxon>
        <taxon>Pterygota</taxon>
        <taxon>Neoptera</taxon>
        <taxon>Polyneoptera</taxon>
        <taxon>Dictyoptera</taxon>
        <taxon>Blattodea</taxon>
        <taxon>Blaberoidea</taxon>
        <taxon>Blaberidae</taxon>
        <taxon>Oxyhaloinae</taxon>
        <taxon>Rhyparobia</taxon>
    </lineage>
</organism>
<protein>
    <recommendedName>
        <fullName>Leucokinin-6</fullName>
    </recommendedName>
    <alternativeName>
        <fullName>Leucokinin VI</fullName>
        <shortName>L-VI</shortName>
    </alternativeName>
</protein>
<dbReference type="PIR" id="JS0316">
    <property type="entry name" value="JS0316"/>
</dbReference>
<dbReference type="GO" id="GO:0005576">
    <property type="term" value="C:extracellular region"/>
    <property type="evidence" value="ECO:0007669"/>
    <property type="project" value="UniProtKB-SubCell"/>
</dbReference>
<dbReference type="GO" id="GO:0007218">
    <property type="term" value="P:neuropeptide signaling pathway"/>
    <property type="evidence" value="ECO:0007669"/>
    <property type="project" value="UniProtKB-KW"/>
</dbReference>
<sequence>QSSFHSWG</sequence>
<feature type="peptide" id="PRO_0000043451" description="Leucokinin-6">
    <location>
        <begin position="1"/>
        <end position="8"/>
    </location>
</feature>
<feature type="modified residue" description="Pyrrolidone carboxylic acid" evidence="1">
    <location>
        <position position="1"/>
    </location>
</feature>
<feature type="modified residue" description="Glycine amide" evidence="1">
    <location>
        <position position="8"/>
    </location>
</feature>
<proteinExistence type="evidence at protein level"/>